<organism>
    <name type="scientific">Saccharomyces cerevisiae (strain JAY291)</name>
    <name type="common">Baker's yeast</name>
    <dbReference type="NCBI Taxonomy" id="574961"/>
    <lineage>
        <taxon>Eukaryota</taxon>
        <taxon>Fungi</taxon>
        <taxon>Dikarya</taxon>
        <taxon>Ascomycota</taxon>
        <taxon>Saccharomycotina</taxon>
        <taxon>Saccharomycetes</taxon>
        <taxon>Saccharomycetales</taxon>
        <taxon>Saccharomycetaceae</taxon>
        <taxon>Saccharomyces</taxon>
    </lineage>
</organism>
<sequence>MGEQNKLYYDVEKLVNSLQESFDLDCAQSVSLFTSKSRSNEAWLEELENKFKLKDDVELDDVENLRAEIDMKLNMLEDKVSYYERLYKELEEFQNEIKIKTVVNNRRQSRTPI</sequence>
<protein>
    <recommendedName>
        <fullName>Biogenesis of lysosome-related organelles complex 1 subunit BLI1</fullName>
        <shortName>BLOC-1 subunit BLI1</shortName>
    </recommendedName>
    <alternativeName>
        <fullName>BLOC-1 interactor 1</fullName>
    </alternativeName>
</protein>
<keyword id="KW-0175">Coiled coil</keyword>
<keyword id="KW-0967">Endosome</keyword>
<keyword id="KW-0813">Transport</keyword>
<comment type="function">
    <text evidence="1">Component of the biogenesis of lysosome-related organelles complex-1 (BLOC-1) involved in endosomal cargo sorting.</text>
</comment>
<comment type="subunit">
    <text evidence="1">Component of the biogenesis of lysosome-related organelles complex-1 (BLOC-1) composed of at least BLI1, BLS1, CNL1, KXD1, SNN1 and VAB2.</text>
</comment>
<comment type="subcellular location">
    <subcellularLocation>
        <location evidence="1">Endosome</location>
    </subcellularLocation>
</comment>
<comment type="similarity">
    <text evidence="3">Belongs to the BLI1 family.</text>
</comment>
<reference key="1">
    <citation type="journal article" date="2009" name="Genome Res.">
        <title>Genome structure of a Saccharomyces cerevisiae strain widely used in bioethanol production.</title>
        <authorList>
            <person name="Argueso J.L."/>
            <person name="Carazzolle M.F."/>
            <person name="Mieczkowski P.A."/>
            <person name="Duarte F.M."/>
            <person name="Netto O.V.C."/>
            <person name="Missawa S.K."/>
            <person name="Galzerani F."/>
            <person name="Costa G.G.L."/>
            <person name="Vidal R.O."/>
            <person name="Noronha M.F."/>
            <person name="Dominska M."/>
            <person name="Andrietta M.G.S."/>
            <person name="Andrietta S.R."/>
            <person name="Cunha A.F."/>
            <person name="Gomes L.H."/>
            <person name="Tavares F.C.A."/>
            <person name="Alcarde A.R."/>
            <person name="Dietrich F.S."/>
            <person name="McCusker J.H."/>
            <person name="Petes T.D."/>
            <person name="Pereira G.A.G."/>
        </authorList>
    </citation>
    <scope>NUCLEOTIDE SEQUENCE [LARGE SCALE GENOMIC DNA]</scope>
    <source>
        <strain>JAY291</strain>
    </source>
</reference>
<name>BLI1_YEAS2</name>
<gene>
    <name type="primary">BLI1</name>
    <name type="ORF">C1Q_02019</name>
</gene>
<evidence type="ECO:0000250" key="1"/>
<evidence type="ECO:0000255" key="2"/>
<evidence type="ECO:0000305" key="3"/>
<dbReference type="EMBL" id="ACFL01000080">
    <property type="protein sequence ID" value="EEU07430.1"/>
    <property type="molecule type" value="Genomic_DNA"/>
</dbReference>
<dbReference type="OrthoDB" id="30837at4893"/>
<dbReference type="Proteomes" id="UP000008073">
    <property type="component" value="Unassembled WGS sequence"/>
</dbReference>
<dbReference type="GO" id="GO:0005768">
    <property type="term" value="C:endosome"/>
    <property type="evidence" value="ECO:0007669"/>
    <property type="project" value="UniProtKB-SubCell"/>
</dbReference>
<dbReference type="InterPro" id="IPR020491">
    <property type="entry name" value="BLI1"/>
</dbReference>
<dbReference type="Pfam" id="PF17324">
    <property type="entry name" value="BLI1"/>
    <property type="match status" value="1"/>
</dbReference>
<accession>C7GP13</accession>
<feature type="chain" id="PRO_0000410618" description="Biogenesis of lysosome-related organelles complex 1 subunit BLI1">
    <location>
        <begin position="1"/>
        <end position="113"/>
    </location>
</feature>
<feature type="coiled-coil region" evidence="2">
    <location>
        <begin position="57"/>
        <end position="97"/>
    </location>
</feature>
<proteinExistence type="inferred from homology"/>